<gene>
    <name evidence="1" type="primary">NS</name>
</gene>
<accession>Q01639</accession>
<accession>A7BHX8</accession>
<accession>Q9YMF4</accession>
<accession>Q9YMF5</accession>
<organismHost>
    <name type="scientific">Homo sapiens</name>
    <name type="common">Human</name>
    <dbReference type="NCBI Taxonomy" id="9606"/>
</organismHost>
<organismHost>
    <name type="scientific">Sus scrofa</name>
    <name type="common">Pig</name>
    <dbReference type="NCBI Taxonomy" id="9823"/>
</organismHost>
<reference key="1">
    <citation type="journal article" date="1999" name="Virology">
        <title>The ORF, regulated synthesis, and persistence-specific variation of influenza C viral NS1 protein.</title>
        <authorList>
            <person name="Marschall M."/>
            <person name="Helten A."/>
            <person name="Hechtfischer A."/>
            <person name="Zach A."/>
            <person name="Banaschewski C."/>
            <person name="Hell W."/>
            <person name="Meier-Ewert H."/>
        </authorList>
    </citation>
    <scope>NUCLEOTIDE SEQUENCE [MRNA]</scope>
    <scope>SUBCELLULAR LOCATION</scope>
    <scope>IDENTIFICATION OF FRAMESHIFT</scope>
    <source>
        <strain>C/Ann Arbor/1/50-pi</strain>
        <strain>Wild-type</strain>
    </source>
</reference>
<reference key="2">
    <citation type="journal article" date="2007" name="J. Virol.">
        <title>A mutation on influenza C virus M1 protein affects virion morphology by altering the membrane affinity of the protein.</title>
        <authorList>
            <person name="Muraki Y."/>
            <person name="Murata T."/>
            <person name="Takashita E."/>
            <person name="Matsuzaki Y."/>
            <person name="Sugawara K."/>
            <person name="Hongo S."/>
        </authorList>
    </citation>
    <scope>NUCLEOTIDE SEQUENCE [MRNA]</scope>
</reference>
<reference key="3">
    <citation type="journal article" date="1986" name="Virology">
        <title>Epidemiology of influenza C virus in man: multiple evolutionary lineages and low rate of change.</title>
        <authorList>
            <person name="Buonagurio D.A."/>
            <person name="Nakada S."/>
            <person name="Fitch W.M."/>
            <person name="Palese P."/>
        </authorList>
    </citation>
    <scope>NUCLEOTIDE SEQUENCE [GENOMIC RNA] OF 6-241</scope>
</reference>
<reference key="4">
    <citation type="journal article" date="2000" name="J. Gen. Virol.">
        <title>Phylogenetic analysis of influenza C virus nonstructural (NS) protein genes and identification of the NS2 protein.</title>
        <authorList>
            <person name="Alamgir A.S.M."/>
            <person name="Matsuzaki Y."/>
            <person name="Hongo S."/>
            <person name="Tsuchiya E."/>
            <person name="Sugawara K."/>
            <person name="Muraki Y."/>
            <person name="Nakamura K."/>
        </authorList>
    </citation>
    <scope>IDENTIFICATION OF FRAMESHIFT</scope>
</reference>
<feature type="chain" id="PRO_0000044588" description="Non-structural protein 1">
    <location>
        <begin position="1"/>
        <end position="246"/>
    </location>
</feature>
<feature type="sequence variant" description="In strain: C/Ann Arbor/1/50-pi.">
    <original>T</original>
    <variation>K</variation>
    <location>
        <position position="39"/>
    </location>
</feature>
<feature type="sequence variant">
    <original>R</original>
    <variation>K</variation>
    <location>
        <position position="46"/>
    </location>
</feature>
<feature type="sequence variant">
    <original>T</original>
    <variation>A</variation>
    <location>
        <position position="74"/>
    </location>
</feature>
<feature type="sequence variant" description="In strain: C/Ann Arbor/1/50-pi.">
    <original>V</original>
    <variation>I</variation>
    <location>
        <position position="84"/>
    </location>
</feature>
<feature type="sequence variant" description="In strain: C/Ann Arbor/1/50-pi.">
    <original>A</original>
    <variation>T</variation>
    <location>
        <position position="96"/>
    </location>
</feature>
<feature type="sequence variant">
    <original>S</original>
    <variation>R</variation>
    <location>
        <position position="98"/>
    </location>
</feature>
<feature type="sequence variant">
    <original>K</original>
    <variation>R</variation>
    <location>
        <position position="179"/>
    </location>
</feature>
<feature type="sequence variant" description="In strain: C/Ann Arbor/1/50-pi.">
    <original>R</original>
    <variation>K</variation>
    <location>
        <position position="189"/>
    </location>
</feature>
<feature type="sequence variant">
    <original>K</original>
    <variation>T</variation>
    <location>
        <position position="228"/>
    </location>
</feature>
<feature type="sequence variant" description="In strain: C/Ann Arbor/1/50-pi.">
    <original>D</original>
    <variation>N</variation>
    <location>
        <position position="232"/>
    </location>
</feature>
<sequence length="246" mass="27752">MSDKTVKSTNLMAFVATKMLERQEDLDTCTEMQVEKMKTSTKARLRTESSFAPRTWEDAIKDGELLFNGTILQTESPTMTPASVEMKGKKFPIDFAPSNIAPIGQNPIYLSPCIPNFDGNVWEATMYHHRGATLTKTMNCNCFQRTIWCHPNPSRMRLSYAFVLYCRNTKKICGYLIAKQVAGIETGIRKCFRCIKSGFVMATDEISLTILQSIKSGAQLDPYWGNEKPDIDKTEAYMLSLREAGP</sequence>
<protein>
    <recommendedName>
        <fullName evidence="1">Non-structural protein 1</fullName>
        <shortName evidence="1">NS1</shortName>
    </recommendedName>
    <alternativeName>
        <fullName evidence="1">NS1A</fullName>
    </alternativeName>
</protein>
<organism>
    <name type="scientific">Influenza C virus (strain C/Ann Arbor/1/1950)</name>
    <dbReference type="NCBI Taxonomy" id="11553"/>
    <lineage>
        <taxon>Viruses</taxon>
        <taxon>Riboviria</taxon>
        <taxon>Orthornavirae</taxon>
        <taxon>Negarnaviricota</taxon>
        <taxon>Polyploviricotina</taxon>
        <taxon>Insthoviricetes</taxon>
        <taxon>Articulavirales</taxon>
        <taxon>Orthomyxoviridae</taxon>
        <taxon>Gammainfluenzavirus</taxon>
        <taxon>Gammainfluenzavirus influenzae</taxon>
        <taxon>Influenza C virus</taxon>
    </lineage>
</organism>
<name>NS1_INCAA</name>
<dbReference type="EMBL" id="AF102026">
    <property type="protein sequence ID" value="AAC98304.1"/>
    <property type="molecule type" value="mRNA"/>
</dbReference>
<dbReference type="EMBL" id="AF102027">
    <property type="protein sequence ID" value="AAC98305.1"/>
    <property type="molecule type" value="mRNA"/>
</dbReference>
<dbReference type="EMBL" id="AB283001">
    <property type="protein sequence ID" value="BAF74590.1"/>
    <property type="molecule type" value="Viral_cRNA"/>
</dbReference>
<dbReference type="EMBL" id="D00029">
    <property type="protein sequence ID" value="BAA24044.1"/>
    <property type="status" value="ALT_FRAME"/>
    <property type="molecule type" value="Genomic_RNA"/>
</dbReference>
<dbReference type="IntAct" id="Q01639">
    <property type="interactions" value="1"/>
</dbReference>
<dbReference type="DNASU" id="3077236"/>
<dbReference type="KEGG" id="vg:3077236"/>
<dbReference type="OrthoDB" id="37636at10239"/>
<dbReference type="Proteomes" id="UP000008286">
    <property type="component" value="Genome"/>
</dbReference>
<dbReference type="GO" id="GO:0030430">
    <property type="term" value="C:host cell cytoplasm"/>
    <property type="evidence" value="ECO:0007669"/>
    <property type="project" value="UniProtKB-SubCell"/>
</dbReference>
<dbReference type="GO" id="GO:0042025">
    <property type="term" value="C:host cell nucleus"/>
    <property type="evidence" value="ECO:0007669"/>
    <property type="project" value="UniProtKB-SubCell"/>
</dbReference>
<dbReference type="GO" id="GO:0003723">
    <property type="term" value="F:RNA binding"/>
    <property type="evidence" value="ECO:0007669"/>
    <property type="project" value="UniProtKB-KW"/>
</dbReference>
<dbReference type="GO" id="GO:0039540">
    <property type="term" value="P:symbiont-mediated suppression of host cytoplasmic pattern recognition receptor signaling pathway via inhibition of RIG-I activity"/>
    <property type="evidence" value="ECO:0007669"/>
    <property type="project" value="UniProtKB-KW"/>
</dbReference>
<dbReference type="GO" id="GO:0039502">
    <property type="term" value="P:symbiont-mediated suppression of host type I interferon-mediated signaling pathway"/>
    <property type="evidence" value="ECO:0007669"/>
    <property type="project" value="UniProtKB-KW"/>
</dbReference>
<dbReference type="HAMAP" id="MF_04066">
    <property type="entry name" value="INFV_NS1"/>
    <property type="match status" value="1"/>
</dbReference>
<dbReference type="InterPro" id="IPR005187">
    <property type="entry name" value="Flu_C_NS1"/>
</dbReference>
<dbReference type="InterPro" id="IPR005188">
    <property type="entry name" value="Flu_C_NS2"/>
</dbReference>
<dbReference type="InterPro" id="IPR004208">
    <property type="entry name" value="NS1"/>
</dbReference>
<dbReference type="Pfam" id="PF03506">
    <property type="entry name" value="Flu_C_NS1"/>
    <property type="match status" value="1"/>
</dbReference>
<dbReference type="Pfam" id="PF03555">
    <property type="entry name" value="Flu_C_NS2"/>
    <property type="match status" value="1"/>
</dbReference>
<evidence type="ECO:0000255" key="1">
    <source>
        <dbReference type="HAMAP-Rule" id="MF_04066"/>
    </source>
</evidence>
<evidence type="ECO:0000269" key="2">
    <source>
    </source>
</evidence>
<comment type="function">
    <text evidence="1">Prevents the establishment of the cellular antiviral state initiated by host RIGI, which normally triggers the antiviral transduction signal that leads to the activation of type I IFN genes by transcription factors IRF3 and IRF7. Also participates in the up-regulation of the splicing of viral mRNAs.</text>
</comment>
<comment type="subcellular location">
    <subcellularLocation>
        <location evidence="1 2">Host cytoplasm</location>
    </subcellularLocation>
    <subcellularLocation>
        <location evidence="1 2">Host nucleus</location>
    </subcellularLocation>
</comment>
<comment type="alternative products">
    <event type="alternative splicing"/>
    <isoform>
        <id>Q01639-1</id>
        <name>NS1</name>
        <sequence type="displayed"/>
    </isoform>
    <isoform>
        <id>Q01640-1</id>
        <name>NEP</name>
        <name>NS2</name>
        <sequence type="external"/>
    </isoform>
</comment>
<comment type="PTM">
    <text>The NS1 protein of strain C/Ann Arbor/1/50-pi is phosphorylated.</text>
</comment>
<comment type="miscellaneous">
    <text>The strain C/Ann Arbor/1/50-pi causes persistent infection.</text>
</comment>
<comment type="similarity">
    <text evidence="1">Belongs to the influenza C viruses NS1 family.</text>
</comment>
<comment type="sequence caution">
    <conflict type="frameshift">
        <sequence resource="EMBL-CDS" id="BAA24044"/>
    </conflict>
</comment>
<proteinExistence type="evidence at transcript level"/>
<keyword id="KW-0025">Alternative splicing</keyword>
<keyword id="KW-1035">Host cytoplasm</keyword>
<keyword id="KW-1048">Host nucleus</keyword>
<keyword id="KW-0945">Host-virus interaction</keyword>
<keyword id="KW-1090">Inhibition of host innate immune response by virus</keyword>
<keyword id="KW-1114">Inhibition of host interferon signaling pathway by virus</keyword>
<keyword id="KW-1088">Inhibition of host RIG-I by virus</keyword>
<keyword id="KW-1113">Inhibition of host RLR pathway by virus</keyword>
<keyword id="KW-0922">Interferon antiviral system evasion</keyword>
<keyword id="KW-1185">Reference proteome</keyword>
<keyword id="KW-0694">RNA-binding</keyword>
<keyword id="KW-0899">Viral immunoevasion</keyword>